<organism>
    <name type="scientific">Dictyoglomus thermophilum (strain ATCC 35947 / DSM 3960 / H-6-12)</name>
    <dbReference type="NCBI Taxonomy" id="309799"/>
    <lineage>
        <taxon>Bacteria</taxon>
        <taxon>Pseudomonadati</taxon>
        <taxon>Dictyoglomota</taxon>
        <taxon>Dictyoglomia</taxon>
        <taxon>Dictyoglomales</taxon>
        <taxon>Dictyoglomaceae</taxon>
        <taxon>Dictyoglomus</taxon>
    </lineage>
</organism>
<feature type="chain" id="PRO_1000141394" description="Large ribosomal subunit protein uL1">
    <location>
        <begin position="1"/>
        <end position="242"/>
    </location>
</feature>
<proteinExistence type="inferred from homology"/>
<protein>
    <recommendedName>
        <fullName evidence="1">Large ribosomal subunit protein uL1</fullName>
    </recommendedName>
    <alternativeName>
        <fullName evidence="2">50S ribosomal protein L1</fullName>
    </alternativeName>
</protein>
<reference key="1">
    <citation type="journal article" date="2014" name="Genome Announc.">
        <title>Complete Genome Sequence of the Extreme Thermophile Dictyoglomus thermophilum H-6-12.</title>
        <authorList>
            <person name="Coil D.A."/>
            <person name="Badger J.H."/>
            <person name="Forberger H.C."/>
            <person name="Riggs F."/>
            <person name="Madupu R."/>
            <person name="Fedorova N."/>
            <person name="Ward N."/>
            <person name="Robb F.T."/>
            <person name="Eisen J.A."/>
        </authorList>
    </citation>
    <scope>NUCLEOTIDE SEQUENCE [LARGE SCALE GENOMIC DNA]</scope>
    <source>
        <strain>ATCC 35947 / DSM 3960 / H-6-12</strain>
    </source>
</reference>
<dbReference type="EMBL" id="CP001146">
    <property type="protein sequence ID" value="ACI18276.1"/>
    <property type="molecule type" value="Genomic_DNA"/>
</dbReference>
<dbReference type="RefSeq" id="WP_012546908.1">
    <property type="nucleotide sequence ID" value="NC_011297.1"/>
</dbReference>
<dbReference type="SMR" id="B5YEX9"/>
<dbReference type="STRING" id="309799.DICTH_1259"/>
<dbReference type="PaxDb" id="309799-DICTH_1259"/>
<dbReference type="KEGG" id="dth:DICTH_1259"/>
<dbReference type="eggNOG" id="COG0081">
    <property type="taxonomic scope" value="Bacteria"/>
</dbReference>
<dbReference type="HOGENOM" id="CLU_062853_0_0_0"/>
<dbReference type="OrthoDB" id="9803740at2"/>
<dbReference type="Proteomes" id="UP000001733">
    <property type="component" value="Chromosome"/>
</dbReference>
<dbReference type="GO" id="GO:0015934">
    <property type="term" value="C:large ribosomal subunit"/>
    <property type="evidence" value="ECO:0007669"/>
    <property type="project" value="InterPro"/>
</dbReference>
<dbReference type="GO" id="GO:0019843">
    <property type="term" value="F:rRNA binding"/>
    <property type="evidence" value="ECO:0007669"/>
    <property type="project" value="UniProtKB-UniRule"/>
</dbReference>
<dbReference type="GO" id="GO:0003735">
    <property type="term" value="F:structural constituent of ribosome"/>
    <property type="evidence" value="ECO:0007669"/>
    <property type="project" value="InterPro"/>
</dbReference>
<dbReference type="GO" id="GO:0000049">
    <property type="term" value="F:tRNA binding"/>
    <property type="evidence" value="ECO:0007669"/>
    <property type="project" value="UniProtKB-KW"/>
</dbReference>
<dbReference type="GO" id="GO:0006417">
    <property type="term" value="P:regulation of translation"/>
    <property type="evidence" value="ECO:0007669"/>
    <property type="project" value="UniProtKB-KW"/>
</dbReference>
<dbReference type="GO" id="GO:0006412">
    <property type="term" value="P:translation"/>
    <property type="evidence" value="ECO:0007669"/>
    <property type="project" value="UniProtKB-UniRule"/>
</dbReference>
<dbReference type="CDD" id="cd00403">
    <property type="entry name" value="Ribosomal_L1"/>
    <property type="match status" value="1"/>
</dbReference>
<dbReference type="FunFam" id="3.40.50.790:FF:000001">
    <property type="entry name" value="50S ribosomal protein L1"/>
    <property type="match status" value="1"/>
</dbReference>
<dbReference type="Gene3D" id="3.30.190.20">
    <property type="match status" value="1"/>
</dbReference>
<dbReference type="Gene3D" id="3.40.50.790">
    <property type="match status" value="1"/>
</dbReference>
<dbReference type="HAMAP" id="MF_01318_B">
    <property type="entry name" value="Ribosomal_uL1_B"/>
    <property type="match status" value="1"/>
</dbReference>
<dbReference type="InterPro" id="IPR005878">
    <property type="entry name" value="Ribosom_uL1_bac-type"/>
</dbReference>
<dbReference type="InterPro" id="IPR002143">
    <property type="entry name" value="Ribosomal_uL1"/>
</dbReference>
<dbReference type="InterPro" id="IPR023674">
    <property type="entry name" value="Ribosomal_uL1-like"/>
</dbReference>
<dbReference type="InterPro" id="IPR028364">
    <property type="entry name" value="Ribosomal_uL1/biogenesis"/>
</dbReference>
<dbReference type="InterPro" id="IPR016095">
    <property type="entry name" value="Ribosomal_uL1_3-a/b-sand"/>
</dbReference>
<dbReference type="NCBIfam" id="TIGR01169">
    <property type="entry name" value="rplA_bact"/>
    <property type="match status" value="1"/>
</dbReference>
<dbReference type="PANTHER" id="PTHR36427">
    <property type="entry name" value="54S RIBOSOMAL PROTEIN L1, MITOCHONDRIAL"/>
    <property type="match status" value="1"/>
</dbReference>
<dbReference type="PANTHER" id="PTHR36427:SF3">
    <property type="entry name" value="LARGE RIBOSOMAL SUBUNIT PROTEIN UL1M"/>
    <property type="match status" value="1"/>
</dbReference>
<dbReference type="Pfam" id="PF00687">
    <property type="entry name" value="Ribosomal_L1"/>
    <property type="match status" value="1"/>
</dbReference>
<dbReference type="PIRSF" id="PIRSF002155">
    <property type="entry name" value="Ribosomal_L1"/>
    <property type="match status" value="1"/>
</dbReference>
<dbReference type="SUPFAM" id="SSF56808">
    <property type="entry name" value="Ribosomal protein L1"/>
    <property type="match status" value="1"/>
</dbReference>
<gene>
    <name evidence="1" type="primary">rplA</name>
    <name type="ordered locus">DICTH_1259</name>
</gene>
<keyword id="KW-0678">Repressor</keyword>
<keyword id="KW-0687">Ribonucleoprotein</keyword>
<keyword id="KW-0689">Ribosomal protein</keyword>
<keyword id="KW-0694">RNA-binding</keyword>
<keyword id="KW-0699">rRNA-binding</keyword>
<keyword id="KW-0810">Translation regulation</keyword>
<keyword id="KW-0820">tRNA-binding</keyword>
<name>RL1_DICT6</name>
<sequence length="242" mass="26415">MAKRGKRYQQLLSLIEKGKLYSPKEAVSLVKKLATAKFDETINLAVRLGVDPRHADQQVRGTVVLPYGTGKEKKVLVFAEGEKAQEAREAGADYVGGEDLVKQIESGWLDFDVAIATPDIMGTLKIPSRLGKILGPRGLMPNPKTGTVTNDIAKAVKEYKAGRVEFRTDRYGIVHVPIGKASFSEEALYKNLMTVLGTLLRLKPAAAKGQYFKSIYISPSMGPSVPIDTKNIADLIKQEEAA</sequence>
<comment type="function">
    <text evidence="1">Binds directly to 23S rRNA. The L1 stalk is quite mobile in the ribosome, and is involved in E site tRNA release.</text>
</comment>
<comment type="function">
    <text evidence="1">Protein L1 is also a translational repressor protein, it controls the translation of the L11 operon by binding to its mRNA.</text>
</comment>
<comment type="subunit">
    <text evidence="1">Part of the 50S ribosomal subunit.</text>
</comment>
<comment type="similarity">
    <text evidence="1">Belongs to the universal ribosomal protein uL1 family.</text>
</comment>
<accession>B5YEX9</accession>
<evidence type="ECO:0000255" key="1">
    <source>
        <dbReference type="HAMAP-Rule" id="MF_01318"/>
    </source>
</evidence>
<evidence type="ECO:0000305" key="2"/>